<protein>
    <recommendedName>
        <fullName evidence="1">UDP-2,3-diacylglucosamine hydrolase</fullName>
        <ecNumber evidence="1">3.6.1.54</ecNumber>
    </recommendedName>
    <alternativeName>
        <fullName evidence="1">UDP-2,3-diacylglucosamine diphosphatase</fullName>
    </alternativeName>
</protein>
<keyword id="KW-0997">Cell inner membrane</keyword>
<keyword id="KW-1003">Cell membrane</keyword>
<keyword id="KW-0378">Hydrolase</keyword>
<keyword id="KW-0441">Lipid A biosynthesis</keyword>
<keyword id="KW-0444">Lipid biosynthesis</keyword>
<keyword id="KW-0443">Lipid metabolism</keyword>
<keyword id="KW-0464">Manganese</keyword>
<keyword id="KW-0472">Membrane</keyword>
<keyword id="KW-0479">Metal-binding</keyword>
<feature type="chain" id="PRO_1000129530" description="UDP-2,3-diacylglucosamine hydrolase">
    <location>
        <begin position="1"/>
        <end position="240"/>
    </location>
</feature>
<feature type="binding site" evidence="1">
    <location>
        <position position="8"/>
    </location>
    <ligand>
        <name>Mn(2+)</name>
        <dbReference type="ChEBI" id="CHEBI:29035"/>
        <label>1</label>
    </ligand>
</feature>
<feature type="binding site" evidence="1">
    <location>
        <position position="10"/>
    </location>
    <ligand>
        <name>Mn(2+)</name>
        <dbReference type="ChEBI" id="CHEBI:29035"/>
        <label>1</label>
    </ligand>
</feature>
<feature type="binding site" evidence="1">
    <location>
        <position position="41"/>
    </location>
    <ligand>
        <name>Mn(2+)</name>
        <dbReference type="ChEBI" id="CHEBI:29035"/>
        <label>1</label>
    </ligand>
</feature>
<feature type="binding site" evidence="1">
    <location>
        <position position="41"/>
    </location>
    <ligand>
        <name>Mn(2+)</name>
        <dbReference type="ChEBI" id="CHEBI:29035"/>
        <label>2</label>
    </ligand>
</feature>
<feature type="binding site" evidence="1">
    <location>
        <begin position="79"/>
        <end position="80"/>
    </location>
    <ligand>
        <name>substrate</name>
    </ligand>
</feature>
<feature type="binding site" evidence="1">
    <location>
        <position position="79"/>
    </location>
    <ligand>
        <name>Mn(2+)</name>
        <dbReference type="ChEBI" id="CHEBI:29035"/>
        <label>2</label>
    </ligand>
</feature>
<feature type="binding site" evidence="1">
    <location>
        <position position="114"/>
    </location>
    <ligand>
        <name>Mn(2+)</name>
        <dbReference type="ChEBI" id="CHEBI:29035"/>
        <label>2</label>
    </ligand>
</feature>
<feature type="binding site" evidence="1">
    <location>
        <position position="122"/>
    </location>
    <ligand>
        <name>substrate</name>
    </ligand>
</feature>
<feature type="binding site" evidence="1">
    <location>
        <position position="160"/>
    </location>
    <ligand>
        <name>substrate</name>
    </ligand>
</feature>
<feature type="binding site" evidence="1">
    <location>
        <position position="164"/>
    </location>
    <ligand>
        <name>substrate</name>
    </ligand>
</feature>
<feature type="binding site" evidence="1">
    <location>
        <position position="167"/>
    </location>
    <ligand>
        <name>substrate</name>
    </ligand>
</feature>
<feature type="binding site" evidence="1">
    <location>
        <position position="195"/>
    </location>
    <ligand>
        <name>Mn(2+)</name>
        <dbReference type="ChEBI" id="CHEBI:29035"/>
        <label>2</label>
    </ligand>
</feature>
<feature type="binding site" evidence="1">
    <location>
        <position position="195"/>
    </location>
    <ligand>
        <name>substrate</name>
    </ligand>
</feature>
<feature type="binding site" evidence="1">
    <location>
        <position position="197"/>
    </location>
    <ligand>
        <name>Mn(2+)</name>
        <dbReference type="ChEBI" id="CHEBI:29035"/>
        <label>1</label>
    </ligand>
</feature>
<accession>B5EYD5</accession>
<evidence type="ECO:0000255" key="1">
    <source>
        <dbReference type="HAMAP-Rule" id="MF_00575"/>
    </source>
</evidence>
<reference key="1">
    <citation type="journal article" date="2011" name="J. Bacteriol.">
        <title>Comparative genomics of 28 Salmonella enterica isolates: evidence for CRISPR-mediated adaptive sublineage evolution.</title>
        <authorList>
            <person name="Fricke W.F."/>
            <person name="Mammel M.K."/>
            <person name="McDermott P.F."/>
            <person name="Tartera C."/>
            <person name="White D.G."/>
            <person name="Leclerc J.E."/>
            <person name="Ravel J."/>
            <person name="Cebula T.A."/>
        </authorList>
    </citation>
    <scope>NUCLEOTIDE SEQUENCE [LARGE SCALE GENOMIC DNA]</scope>
    <source>
        <strain>SL483</strain>
    </source>
</reference>
<dbReference type="EC" id="3.6.1.54" evidence="1"/>
<dbReference type="EMBL" id="CP001138">
    <property type="protein sequence ID" value="ACH48829.1"/>
    <property type="molecule type" value="Genomic_DNA"/>
</dbReference>
<dbReference type="RefSeq" id="WP_000212279.1">
    <property type="nucleotide sequence ID" value="NC_011149.1"/>
</dbReference>
<dbReference type="SMR" id="B5EYD5"/>
<dbReference type="KEGG" id="sea:SeAg_B0581"/>
<dbReference type="HOGENOM" id="CLU_074586_0_0_6"/>
<dbReference type="UniPathway" id="UPA00359">
    <property type="reaction ID" value="UER00480"/>
</dbReference>
<dbReference type="Proteomes" id="UP000008819">
    <property type="component" value="Chromosome"/>
</dbReference>
<dbReference type="GO" id="GO:0005737">
    <property type="term" value="C:cytoplasm"/>
    <property type="evidence" value="ECO:0007669"/>
    <property type="project" value="InterPro"/>
</dbReference>
<dbReference type="GO" id="GO:0019897">
    <property type="term" value="C:extrinsic component of plasma membrane"/>
    <property type="evidence" value="ECO:0007669"/>
    <property type="project" value="UniProtKB-UniRule"/>
</dbReference>
<dbReference type="GO" id="GO:0030145">
    <property type="term" value="F:manganese ion binding"/>
    <property type="evidence" value="ECO:0007669"/>
    <property type="project" value="UniProtKB-UniRule"/>
</dbReference>
<dbReference type="GO" id="GO:0008758">
    <property type="term" value="F:UDP-2,3-diacylglucosamine hydrolase activity"/>
    <property type="evidence" value="ECO:0007669"/>
    <property type="project" value="UniProtKB-UniRule"/>
</dbReference>
<dbReference type="GO" id="GO:0009245">
    <property type="term" value="P:lipid A biosynthetic process"/>
    <property type="evidence" value="ECO:0007669"/>
    <property type="project" value="UniProtKB-UniRule"/>
</dbReference>
<dbReference type="CDD" id="cd07398">
    <property type="entry name" value="MPP_YbbF-LpxH"/>
    <property type="match status" value="1"/>
</dbReference>
<dbReference type="FunFam" id="3.60.21.10:FF:000012">
    <property type="entry name" value="UDP-2,3-diacylglucosamine hydrolase"/>
    <property type="match status" value="1"/>
</dbReference>
<dbReference type="Gene3D" id="3.60.21.10">
    <property type="match status" value="1"/>
</dbReference>
<dbReference type="HAMAP" id="MF_00575">
    <property type="entry name" value="LpxH"/>
    <property type="match status" value="1"/>
</dbReference>
<dbReference type="InterPro" id="IPR004843">
    <property type="entry name" value="Calcineurin-like_PHP_ApaH"/>
</dbReference>
<dbReference type="InterPro" id="IPR043461">
    <property type="entry name" value="LpxH-like"/>
</dbReference>
<dbReference type="InterPro" id="IPR029052">
    <property type="entry name" value="Metallo-depent_PP-like"/>
</dbReference>
<dbReference type="InterPro" id="IPR010138">
    <property type="entry name" value="UDP-diacylglucosamine_Hdrlase"/>
</dbReference>
<dbReference type="NCBIfam" id="TIGR01854">
    <property type="entry name" value="lipid_A_lpxH"/>
    <property type="match status" value="1"/>
</dbReference>
<dbReference type="NCBIfam" id="NF003743">
    <property type="entry name" value="PRK05340.1"/>
    <property type="match status" value="1"/>
</dbReference>
<dbReference type="PANTHER" id="PTHR34990:SF1">
    <property type="entry name" value="UDP-2,3-DIACYLGLUCOSAMINE HYDROLASE"/>
    <property type="match status" value="1"/>
</dbReference>
<dbReference type="PANTHER" id="PTHR34990">
    <property type="entry name" value="UDP-2,3-DIACYLGLUCOSAMINE HYDROLASE-RELATED"/>
    <property type="match status" value="1"/>
</dbReference>
<dbReference type="Pfam" id="PF00149">
    <property type="entry name" value="Metallophos"/>
    <property type="match status" value="1"/>
</dbReference>
<dbReference type="SUPFAM" id="SSF56300">
    <property type="entry name" value="Metallo-dependent phosphatases"/>
    <property type="match status" value="1"/>
</dbReference>
<name>LPXH_SALA4</name>
<sequence>MATLFIADLHLQTEEPAIVAGFLRFLAVEARQADALYILGDLFEAWIGDDDPNPLHREIAAAIKAVVNVGVPCFFIHGNRDFLIGKRFARESGMILLPQEKVLDLYGRNVLIMHGDTLCTDDAGYQAFRAKVHNPWVQRLFLTLPLFIRRRIAARMRAGSKAANSSKSLDIMDVNAQTVVAEMEKHRVQWLVHGHTHRPAVHELSVNDQPAFRVVLGAWHHEGSMVKVTPDNVELIAFPL</sequence>
<organism>
    <name type="scientific">Salmonella agona (strain SL483)</name>
    <dbReference type="NCBI Taxonomy" id="454166"/>
    <lineage>
        <taxon>Bacteria</taxon>
        <taxon>Pseudomonadati</taxon>
        <taxon>Pseudomonadota</taxon>
        <taxon>Gammaproteobacteria</taxon>
        <taxon>Enterobacterales</taxon>
        <taxon>Enterobacteriaceae</taxon>
        <taxon>Salmonella</taxon>
    </lineage>
</organism>
<gene>
    <name evidence="1" type="primary">lpxH</name>
    <name type="ordered locus">SeAg_B0581</name>
</gene>
<comment type="function">
    <text evidence="1">Hydrolyzes the pyrophosphate bond of UDP-2,3-diacylglucosamine to yield 2,3-diacylglucosamine 1-phosphate (lipid X) and UMP by catalyzing the attack of water at the alpha-P atom. Involved in the biosynthesis of lipid A, a phosphorylated glycolipid that anchors the lipopolysaccharide to the outer membrane of the cell.</text>
</comment>
<comment type="catalytic activity">
    <reaction evidence="1">
        <text>UDP-2-N,3-O-bis[(3R)-3-hydroxytetradecanoyl]-alpha-D-glucosamine + H2O = 2-N,3-O-bis[(3R)-3-hydroxytetradecanoyl]-alpha-D-glucosaminyl 1-phosphate + UMP + 2 H(+)</text>
        <dbReference type="Rhea" id="RHEA:25213"/>
        <dbReference type="ChEBI" id="CHEBI:15377"/>
        <dbReference type="ChEBI" id="CHEBI:15378"/>
        <dbReference type="ChEBI" id="CHEBI:57865"/>
        <dbReference type="ChEBI" id="CHEBI:57957"/>
        <dbReference type="ChEBI" id="CHEBI:78847"/>
        <dbReference type="EC" id="3.6.1.54"/>
    </reaction>
</comment>
<comment type="cofactor">
    <cofactor evidence="1">
        <name>Mn(2+)</name>
        <dbReference type="ChEBI" id="CHEBI:29035"/>
    </cofactor>
    <text evidence="1">Binds 2 Mn(2+) ions per subunit in a binuclear metal center.</text>
</comment>
<comment type="pathway">
    <text evidence="1">Glycolipid biosynthesis; lipid IV(A) biosynthesis; lipid IV(A) from (3R)-3-hydroxytetradecanoyl-[acyl-carrier-protein] and UDP-N-acetyl-alpha-D-glucosamine: step 4/6.</text>
</comment>
<comment type="subcellular location">
    <subcellularLocation>
        <location evidence="1">Cell inner membrane</location>
        <topology evidence="1">Peripheral membrane protein</topology>
        <orientation evidence="1">Cytoplasmic side</orientation>
    </subcellularLocation>
</comment>
<comment type="similarity">
    <text evidence="1">Belongs to the LpxH family.</text>
</comment>
<proteinExistence type="inferred from homology"/>